<keyword id="KW-1185">Reference proteome</keyword>
<keyword id="KW-0687">Ribonucleoprotein</keyword>
<keyword id="KW-0689">Ribosomal protein</keyword>
<keyword id="KW-0694">RNA-binding</keyword>
<keyword id="KW-0699">rRNA-binding</keyword>
<feature type="chain" id="PRO_0000176700" description="Large ribosomal subunit protein bL9">
    <location>
        <begin position="1"/>
        <end position="145"/>
    </location>
</feature>
<protein>
    <recommendedName>
        <fullName evidence="1">Large ribosomal subunit protein bL9</fullName>
    </recommendedName>
    <alternativeName>
        <fullName evidence="2">50S ribosomal protein L9</fullName>
    </alternativeName>
</protein>
<name>RL9_UREPA</name>
<accession>Q9PPT9</accession>
<comment type="function">
    <text evidence="1">Binds to the 23S rRNA.</text>
</comment>
<comment type="similarity">
    <text evidence="1">Belongs to the bacterial ribosomal protein bL9 family.</text>
</comment>
<sequence length="145" mass="16420">MKVILLEDIASLGKKNEIIDVSDGYAKNFLIRQKKAVALTNKSQEVLNKDLAILEAQEQQAILDATLLKDKLEQKPLQFFLKTNNLQTFGSISNKQIIDEINKEQKFITKHMITKPHALGIGEHIVEILLHKKVTAKLHVIVSKE</sequence>
<gene>
    <name evidence="1" type="primary">rplI</name>
    <name evidence="1" type="synonym">rpl9</name>
    <name type="ordered locus">UU551</name>
</gene>
<proteinExistence type="inferred from homology"/>
<evidence type="ECO:0000255" key="1">
    <source>
        <dbReference type="HAMAP-Rule" id="MF_00503"/>
    </source>
</evidence>
<evidence type="ECO:0000305" key="2"/>
<dbReference type="EMBL" id="AF222894">
    <property type="protein sequence ID" value="AAF30964.1"/>
    <property type="molecule type" value="Genomic_DNA"/>
</dbReference>
<dbReference type="RefSeq" id="WP_006688495.1">
    <property type="nucleotide sequence ID" value="NC_002162.1"/>
</dbReference>
<dbReference type="SMR" id="Q9PPT9"/>
<dbReference type="STRING" id="273119.UU551"/>
<dbReference type="EnsemblBacteria" id="AAF30964">
    <property type="protein sequence ID" value="AAF30964"/>
    <property type="gene ID" value="UU551"/>
</dbReference>
<dbReference type="GeneID" id="29672522"/>
<dbReference type="KEGG" id="uur:UU551"/>
<dbReference type="eggNOG" id="COG0359">
    <property type="taxonomic scope" value="Bacteria"/>
</dbReference>
<dbReference type="HOGENOM" id="CLU_078938_3_0_14"/>
<dbReference type="OrthoDB" id="9788336at2"/>
<dbReference type="Proteomes" id="UP000000423">
    <property type="component" value="Chromosome"/>
</dbReference>
<dbReference type="GO" id="GO:1990904">
    <property type="term" value="C:ribonucleoprotein complex"/>
    <property type="evidence" value="ECO:0007669"/>
    <property type="project" value="UniProtKB-KW"/>
</dbReference>
<dbReference type="GO" id="GO:0005840">
    <property type="term" value="C:ribosome"/>
    <property type="evidence" value="ECO:0007669"/>
    <property type="project" value="UniProtKB-KW"/>
</dbReference>
<dbReference type="GO" id="GO:0019843">
    <property type="term" value="F:rRNA binding"/>
    <property type="evidence" value="ECO:0007669"/>
    <property type="project" value="UniProtKB-UniRule"/>
</dbReference>
<dbReference type="GO" id="GO:0003735">
    <property type="term" value="F:structural constituent of ribosome"/>
    <property type="evidence" value="ECO:0007669"/>
    <property type="project" value="InterPro"/>
</dbReference>
<dbReference type="GO" id="GO:0006412">
    <property type="term" value="P:translation"/>
    <property type="evidence" value="ECO:0007669"/>
    <property type="project" value="UniProtKB-UniRule"/>
</dbReference>
<dbReference type="Gene3D" id="3.10.430.100">
    <property type="entry name" value="Ribosomal protein L9, C-terminal domain"/>
    <property type="match status" value="1"/>
</dbReference>
<dbReference type="Gene3D" id="3.40.5.10">
    <property type="entry name" value="Ribosomal protein L9, N-terminal domain"/>
    <property type="match status" value="1"/>
</dbReference>
<dbReference type="HAMAP" id="MF_00503">
    <property type="entry name" value="Ribosomal_bL9"/>
    <property type="match status" value="1"/>
</dbReference>
<dbReference type="InterPro" id="IPR000244">
    <property type="entry name" value="Ribosomal_bL9"/>
</dbReference>
<dbReference type="InterPro" id="IPR009027">
    <property type="entry name" value="Ribosomal_bL9/RNase_H1_N"/>
</dbReference>
<dbReference type="InterPro" id="IPR020594">
    <property type="entry name" value="Ribosomal_bL9_bac/chp"/>
</dbReference>
<dbReference type="InterPro" id="IPR020069">
    <property type="entry name" value="Ribosomal_bL9_C"/>
</dbReference>
<dbReference type="InterPro" id="IPR036791">
    <property type="entry name" value="Ribosomal_bL9_C_sf"/>
</dbReference>
<dbReference type="InterPro" id="IPR020070">
    <property type="entry name" value="Ribosomal_bL9_N"/>
</dbReference>
<dbReference type="InterPro" id="IPR036935">
    <property type="entry name" value="Ribosomal_bL9_N_sf"/>
</dbReference>
<dbReference type="NCBIfam" id="TIGR00158">
    <property type="entry name" value="L9"/>
    <property type="match status" value="1"/>
</dbReference>
<dbReference type="PANTHER" id="PTHR21368">
    <property type="entry name" value="50S RIBOSOMAL PROTEIN L9"/>
    <property type="match status" value="1"/>
</dbReference>
<dbReference type="Pfam" id="PF03948">
    <property type="entry name" value="Ribosomal_L9_C"/>
    <property type="match status" value="1"/>
</dbReference>
<dbReference type="Pfam" id="PF01281">
    <property type="entry name" value="Ribosomal_L9_N"/>
    <property type="match status" value="1"/>
</dbReference>
<dbReference type="SUPFAM" id="SSF55658">
    <property type="entry name" value="L9 N-domain-like"/>
    <property type="match status" value="1"/>
</dbReference>
<dbReference type="SUPFAM" id="SSF55653">
    <property type="entry name" value="Ribosomal protein L9 C-domain"/>
    <property type="match status" value="1"/>
</dbReference>
<dbReference type="PROSITE" id="PS00651">
    <property type="entry name" value="RIBOSOMAL_L9"/>
    <property type="match status" value="1"/>
</dbReference>
<reference key="1">
    <citation type="journal article" date="2000" name="Nature">
        <title>The complete sequence of the mucosal pathogen Ureaplasma urealyticum.</title>
        <authorList>
            <person name="Glass J.I."/>
            <person name="Lefkowitz E.J."/>
            <person name="Glass J.S."/>
            <person name="Heiner C.R."/>
            <person name="Chen E.Y."/>
            <person name="Cassell G.H."/>
        </authorList>
    </citation>
    <scope>NUCLEOTIDE SEQUENCE [LARGE SCALE GENOMIC DNA]</scope>
    <source>
        <strain>ATCC 700970</strain>
    </source>
</reference>
<organism>
    <name type="scientific">Ureaplasma parvum serovar 3 (strain ATCC 700970)</name>
    <dbReference type="NCBI Taxonomy" id="273119"/>
    <lineage>
        <taxon>Bacteria</taxon>
        <taxon>Bacillati</taxon>
        <taxon>Mycoplasmatota</taxon>
        <taxon>Mycoplasmoidales</taxon>
        <taxon>Mycoplasmoidaceae</taxon>
        <taxon>Ureaplasma</taxon>
    </lineage>
</organism>